<organism>
    <name type="scientific">Francisella tularensis subsp. novicida (strain U112)</name>
    <dbReference type="NCBI Taxonomy" id="401614"/>
    <lineage>
        <taxon>Bacteria</taxon>
        <taxon>Pseudomonadati</taxon>
        <taxon>Pseudomonadota</taxon>
        <taxon>Gammaproteobacteria</taxon>
        <taxon>Thiotrichales</taxon>
        <taxon>Francisellaceae</taxon>
        <taxon>Francisella</taxon>
    </lineage>
</organism>
<reference key="1">
    <citation type="journal article" date="2007" name="Genome Biol.">
        <title>Comparison of Francisella tularensis genomes reveals evolutionary events associated with the emergence of human pathogenic strains.</title>
        <authorList>
            <person name="Rohmer L."/>
            <person name="Fong C."/>
            <person name="Abmayr S."/>
            <person name="Wasnick M."/>
            <person name="Larson Freeman T.J."/>
            <person name="Radey M."/>
            <person name="Guina T."/>
            <person name="Svensson K."/>
            <person name="Hayden H.S."/>
            <person name="Jacobs M."/>
            <person name="Gallagher L.A."/>
            <person name="Manoil C."/>
            <person name="Ernst R.K."/>
            <person name="Drees B."/>
            <person name="Buckley D."/>
            <person name="Haugen E."/>
            <person name="Bovee D."/>
            <person name="Zhou Y."/>
            <person name="Chang J."/>
            <person name="Levy R."/>
            <person name="Lim R."/>
            <person name="Gillett W."/>
            <person name="Guenthener D."/>
            <person name="Kang A."/>
            <person name="Shaffer S.A."/>
            <person name="Taylor G."/>
            <person name="Chen J."/>
            <person name="Gallis B."/>
            <person name="D'Argenio D.A."/>
            <person name="Forsman M."/>
            <person name="Olson M.V."/>
            <person name="Goodlett D.R."/>
            <person name="Kaul R."/>
            <person name="Miller S.I."/>
            <person name="Brittnacher M.J."/>
        </authorList>
    </citation>
    <scope>NUCLEOTIDE SEQUENCE [LARGE SCALE GENOMIC DNA]</scope>
    <source>
        <strain>U112</strain>
    </source>
</reference>
<accession>A0Q5Q9</accession>
<sequence length="62" mass="7142">MDHSVLNVLVCPICKANLYYDKENQVLVCKADKLAYPIRENIPVMLVEEAKKMTLEEVKKYG</sequence>
<comment type="similarity">
    <text evidence="1">Belongs to the UPF0434 family.</text>
</comment>
<gene>
    <name type="ordered locus">FTN_0682</name>
</gene>
<evidence type="ECO:0000255" key="1">
    <source>
        <dbReference type="HAMAP-Rule" id="MF_01187"/>
    </source>
</evidence>
<dbReference type="EMBL" id="CP000439">
    <property type="protein sequence ID" value="ABK89574.1"/>
    <property type="molecule type" value="Genomic_DNA"/>
</dbReference>
<dbReference type="RefSeq" id="WP_003016659.1">
    <property type="nucleotide sequence ID" value="NZ_CP009633.1"/>
</dbReference>
<dbReference type="SMR" id="A0Q5Q9"/>
<dbReference type="KEGG" id="ftn:FTN_0682"/>
<dbReference type="KEGG" id="ftx:AW25_1342"/>
<dbReference type="BioCyc" id="FTUL401614:G1G75-710-MONOMER"/>
<dbReference type="Proteomes" id="UP000000762">
    <property type="component" value="Chromosome"/>
</dbReference>
<dbReference type="GO" id="GO:0005829">
    <property type="term" value="C:cytosol"/>
    <property type="evidence" value="ECO:0007669"/>
    <property type="project" value="TreeGrafter"/>
</dbReference>
<dbReference type="FunFam" id="2.20.25.10:FF:000002">
    <property type="entry name" value="UPF0434 protein YcaR"/>
    <property type="match status" value="1"/>
</dbReference>
<dbReference type="Gene3D" id="2.20.25.10">
    <property type="match status" value="1"/>
</dbReference>
<dbReference type="HAMAP" id="MF_01187">
    <property type="entry name" value="UPF0434"/>
    <property type="match status" value="1"/>
</dbReference>
<dbReference type="InterPro" id="IPR005651">
    <property type="entry name" value="Trm112-like"/>
</dbReference>
<dbReference type="PANTHER" id="PTHR33505:SF4">
    <property type="entry name" value="PROTEIN PREY, MITOCHONDRIAL"/>
    <property type="match status" value="1"/>
</dbReference>
<dbReference type="PANTHER" id="PTHR33505">
    <property type="entry name" value="ZGC:162634"/>
    <property type="match status" value="1"/>
</dbReference>
<dbReference type="Pfam" id="PF03966">
    <property type="entry name" value="Trm112p"/>
    <property type="match status" value="1"/>
</dbReference>
<dbReference type="SUPFAM" id="SSF158997">
    <property type="entry name" value="Trm112p-like"/>
    <property type="match status" value="1"/>
</dbReference>
<proteinExistence type="inferred from homology"/>
<name>Y682_FRATN</name>
<protein>
    <recommendedName>
        <fullName evidence="1">UPF0434 protein FTN_0682</fullName>
    </recommendedName>
</protein>
<feature type="chain" id="PRO_0000291094" description="UPF0434 protein FTN_0682">
    <location>
        <begin position="1"/>
        <end position="62"/>
    </location>
</feature>